<keyword id="KW-0472">Membrane</keyword>
<keyword id="KW-1185">Reference proteome</keyword>
<keyword id="KW-0812">Transmembrane</keyword>
<keyword id="KW-1133">Transmembrane helix</keyword>
<reference key="1">
    <citation type="submission" date="2007-07" db="EMBL/GenBank/DDBJ databases">
        <authorList>
            <consortium name="NIH - Mammalian Gene Collection (MGC) project"/>
        </authorList>
    </citation>
    <scope>NUCLEOTIDE SEQUENCE [LARGE SCALE MRNA]</scope>
    <source>
        <strain>Hereford</strain>
        <tissue>Hypothalamus</tissue>
    </source>
</reference>
<dbReference type="EMBL" id="BC151269">
    <property type="protein sequence ID" value="AAI51270.1"/>
    <property type="molecule type" value="mRNA"/>
</dbReference>
<dbReference type="RefSeq" id="NP_001094541.1">
    <property type="nucleotide sequence ID" value="NM_001101071.2"/>
</dbReference>
<dbReference type="RefSeq" id="XP_005209908.1">
    <property type="nucleotide sequence ID" value="XM_005209851.5"/>
</dbReference>
<dbReference type="FunCoup" id="A7MB05">
    <property type="interactions" value="14"/>
</dbReference>
<dbReference type="STRING" id="9913.ENSBTAP00000018581"/>
<dbReference type="PaxDb" id="9913-ENSBTAP00000018581"/>
<dbReference type="Ensembl" id="ENSBTAT00000018581.3">
    <property type="protein sequence ID" value="ENSBTAP00000018581.2"/>
    <property type="gene ID" value="ENSBTAG00000013974.3"/>
</dbReference>
<dbReference type="GeneID" id="510133"/>
<dbReference type="KEGG" id="bta:510133"/>
<dbReference type="CTD" id="401498"/>
<dbReference type="VEuPathDB" id="HostDB:ENSBTAG00000013974"/>
<dbReference type="VGNC" id="VGNC:36037">
    <property type="gene designation" value="TMEM215"/>
</dbReference>
<dbReference type="eggNOG" id="ENOG502QZ55">
    <property type="taxonomic scope" value="Eukaryota"/>
</dbReference>
<dbReference type="GeneTree" id="ENSGT00390000006684"/>
<dbReference type="HOGENOM" id="CLU_1165487_0_0_1"/>
<dbReference type="InParanoid" id="A7MB05"/>
<dbReference type="OMA" id="DRSDCPE"/>
<dbReference type="OrthoDB" id="9304762at2759"/>
<dbReference type="TreeFam" id="TF335695"/>
<dbReference type="Proteomes" id="UP000009136">
    <property type="component" value="Chromosome 8"/>
</dbReference>
<dbReference type="Bgee" id="ENSBTAG00000013974">
    <property type="expression patterns" value="Expressed in Ammon's horn and 22 other cell types or tissues"/>
</dbReference>
<dbReference type="GO" id="GO:0016020">
    <property type="term" value="C:membrane"/>
    <property type="evidence" value="ECO:0007669"/>
    <property type="project" value="UniProtKB-SubCell"/>
</dbReference>
<dbReference type="InterPro" id="IPR031486">
    <property type="entry name" value="TMEM215"/>
</dbReference>
<dbReference type="PANTHER" id="PTHR31922">
    <property type="entry name" value="TRANSMEMBRANE PROTEIN 215"/>
    <property type="match status" value="1"/>
</dbReference>
<dbReference type="PANTHER" id="PTHR31922:SF2">
    <property type="entry name" value="TRANSMEMBRANE PROTEIN 215"/>
    <property type="match status" value="1"/>
</dbReference>
<dbReference type="Pfam" id="PF15746">
    <property type="entry name" value="TMEM215"/>
    <property type="match status" value="1"/>
</dbReference>
<comment type="subcellular location">
    <subcellularLocation>
        <location evidence="3">Membrane</location>
        <topology evidence="3">Multi-pass membrane protein</topology>
    </subcellularLocation>
</comment>
<organism>
    <name type="scientific">Bos taurus</name>
    <name type="common">Bovine</name>
    <dbReference type="NCBI Taxonomy" id="9913"/>
    <lineage>
        <taxon>Eukaryota</taxon>
        <taxon>Metazoa</taxon>
        <taxon>Chordata</taxon>
        <taxon>Craniata</taxon>
        <taxon>Vertebrata</taxon>
        <taxon>Euteleostomi</taxon>
        <taxon>Mammalia</taxon>
        <taxon>Eutheria</taxon>
        <taxon>Laurasiatheria</taxon>
        <taxon>Artiodactyla</taxon>
        <taxon>Ruminantia</taxon>
        <taxon>Pecora</taxon>
        <taxon>Bovidae</taxon>
        <taxon>Bovinae</taxon>
        <taxon>Bos</taxon>
    </lineage>
</organism>
<gene>
    <name type="primary">TMEM215</name>
</gene>
<proteinExistence type="evidence at transcript level"/>
<feature type="chain" id="PRO_0000319323" description="Transmembrane protein 215">
    <location>
        <begin position="1"/>
        <end position="235"/>
    </location>
</feature>
<feature type="transmembrane region" description="Helical" evidence="1">
    <location>
        <begin position="12"/>
        <end position="32"/>
    </location>
</feature>
<feature type="transmembrane region" description="Helical" evidence="1">
    <location>
        <begin position="40"/>
        <end position="60"/>
    </location>
</feature>
<feature type="region of interest" description="Disordered" evidence="2">
    <location>
        <begin position="99"/>
        <end position="158"/>
    </location>
</feature>
<accession>A7MB05</accession>
<protein>
    <recommendedName>
        <fullName>Transmembrane protein 215</fullName>
    </recommendedName>
</protein>
<evidence type="ECO:0000255" key="1"/>
<evidence type="ECO:0000256" key="2">
    <source>
        <dbReference type="SAM" id="MobiDB-lite"/>
    </source>
</evidence>
<evidence type="ECO:0000305" key="3"/>
<name>TM215_BOVIN</name>
<sequence length="235" mass="25841">MRPDDINPRTGLVVALVSVFLVFGFMFTVSGMKGETLGNIPLLAIGPAICLPGIAAIALARKTEGCTKWPENELLWVRKLPCFRKPKDKEVVELLRTPSDLESGKGSSDELAKKAGLRGKPSLQGQGELPMASSITTPTPMEEGECQSPGQSGRREETSRYLDGYCPSGSSLTYSALDAKCSAWDRSEHPEPEDSIFFVPQDSIIVCSYKQNSPYDRYCCYINQSQGRWDHETIV</sequence>